<reference key="1">
    <citation type="journal article" date="2002" name="Nature">
        <title>The genome sequence of Schizosaccharomyces pombe.</title>
        <authorList>
            <person name="Wood V."/>
            <person name="Gwilliam R."/>
            <person name="Rajandream M.A."/>
            <person name="Lyne M.H."/>
            <person name="Lyne R."/>
            <person name="Stewart A."/>
            <person name="Sgouros J.G."/>
            <person name="Peat N."/>
            <person name="Hayles J."/>
            <person name="Baker S.G."/>
            <person name="Basham D."/>
            <person name="Bowman S."/>
            <person name="Brooks K."/>
            <person name="Brown D."/>
            <person name="Brown S."/>
            <person name="Chillingworth T."/>
            <person name="Churcher C.M."/>
            <person name="Collins M."/>
            <person name="Connor R."/>
            <person name="Cronin A."/>
            <person name="Davis P."/>
            <person name="Feltwell T."/>
            <person name="Fraser A."/>
            <person name="Gentles S."/>
            <person name="Goble A."/>
            <person name="Hamlin N."/>
            <person name="Harris D.E."/>
            <person name="Hidalgo J."/>
            <person name="Hodgson G."/>
            <person name="Holroyd S."/>
            <person name="Hornsby T."/>
            <person name="Howarth S."/>
            <person name="Huckle E.J."/>
            <person name="Hunt S."/>
            <person name="Jagels K."/>
            <person name="James K.D."/>
            <person name="Jones L."/>
            <person name="Jones M."/>
            <person name="Leather S."/>
            <person name="McDonald S."/>
            <person name="McLean J."/>
            <person name="Mooney P."/>
            <person name="Moule S."/>
            <person name="Mungall K.L."/>
            <person name="Murphy L.D."/>
            <person name="Niblett D."/>
            <person name="Odell C."/>
            <person name="Oliver K."/>
            <person name="O'Neil S."/>
            <person name="Pearson D."/>
            <person name="Quail M.A."/>
            <person name="Rabbinowitsch E."/>
            <person name="Rutherford K.M."/>
            <person name="Rutter S."/>
            <person name="Saunders D."/>
            <person name="Seeger K."/>
            <person name="Sharp S."/>
            <person name="Skelton J."/>
            <person name="Simmonds M.N."/>
            <person name="Squares R."/>
            <person name="Squares S."/>
            <person name="Stevens K."/>
            <person name="Taylor K."/>
            <person name="Taylor R.G."/>
            <person name="Tivey A."/>
            <person name="Walsh S.V."/>
            <person name="Warren T."/>
            <person name="Whitehead S."/>
            <person name="Woodward J.R."/>
            <person name="Volckaert G."/>
            <person name="Aert R."/>
            <person name="Robben J."/>
            <person name="Grymonprez B."/>
            <person name="Weltjens I."/>
            <person name="Vanstreels E."/>
            <person name="Rieger M."/>
            <person name="Schaefer M."/>
            <person name="Mueller-Auer S."/>
            <person name="Gabel C."/>
            <person name="Fuchs M."/>
            <person name="Duesterhoeft A."/>
            <person name="Fritzc C."/>
            <person name="Holzer E."/>
            <person name="Moestl D."/>
            <person name="Hilbert H."/>
            <person name="Borzym K."/>
            <person name="Langer I."/>
            <person name="Beck A."/>
            <person name="Lehrach H."/>
            <person name="Reinhardt R."/>
            <person name="Pohl T.M."/>
            <person name="Eger P."/>
            <person name="Zimmermann W."/>
            <person name="Wedler H."/>
            <person name="Wambutt R."/>
            <person name="Purnelle B."/>
            <person name="Goffeau A."/>
            <person name="Cadieu E."/>
            <person name="Dreano S."/>
            <person name="Gloux S."/>
            <person name="Lelaure V."/>
            <person name="Mottier S."/>
            <person name="Galibert F."/>
            <person name="Aves S.J."/>
            <person name="Xiang Z."/>
            <person name="Hunt C."/>
            <person name="Moore K."/>
            <person name="Hurst S.M."/>
            <person name="Lucas M."/>
            <person name="Rochet M."/>
            <person name="Gaillardin C."/>
            <person name="Tallada V.A."/>
            <person name="Garzon A."/>
            <person name="Thode G."/>
            <person name="Daga R.R."/>
            <person name="Cruzado L."/>
            <person name="Jimenez J."/>
            <person name="Sanchez M."/>
            <person name="del Rey F."/>
            <person name="Benito J."/>
            <person name="Dominguez A."/>
            <person name="Revuelta J.L."/>
            <person name="Moreno S."/>
            <person name="Armstrong J."/>
            <person name="Forsburg S.L."/>
            <person name="Cerutti L."/>
            <person name="Lowe T."/>
            <person name="McCombie W.R."/>
            <person name="Paulsen I."/>
            <person name="Potashkin J."/>
            <person name="Shpakovski G.V."/>
            <person name="Ussery D."/>
            <person name="Barrell B.G."/>
            <person name="Nurse P."/>
        </authorList>
    </citation>
    <scope>NUCLEOTIDE SEQUENCE [LARGE SCALE GENOMIC DNA]</scope>
    <source>
        <strain>972 / ATCC 24843</strain>
    </source>
</reference>
<reference key="2">
    <citation type="journal article" date="2006" name="Nat. Biotechnol.">
        <title>ORFeome cloning and global analysis of protein localization in the fission yeast Schizosaccharomyces pombe.</title>
        <authorList>
            <person name="Matsuyama A."/>
            <person name="Arai R."/>
            <person name="Yashiroda Y."/>
            <person name="Shirai A."/>
            <person name="Kamata A."/>
            <person name="Sekido S."/>
            <person name="Kobayashi Y."/>
            <person name="Hashimoto A."/>
            <person name="Hamamoto M."/>
            <person name="Hiraoka Y."/>
            <person name="Horinouchi S."/>
            <person name="Yoshida M."/>
        </authorList>
    </citation>
    <scope>SUBCELLULAR LOCATION [LARGE SCALE ANALYSIS]</scope>
</reference>
<protein>
    <recommendedName>
        <fullName>Aspartate--tRNA ligase, mitochondrial</fullName>
        <ecNumber>6.1.1.12</ecNumber>
    </recommendedName>
    <alternativeName>
        <fullName>Aspartyl-tRNA synthetase</fullName>
        <shortName>AspRS</shortName>
    </alternativeName>
</protein>
<organism>
    <name type="scientific">Schizosaccharomyces pombe (strain 972 / ATCC 24843)</name>
    <name type="common">Fission yeast</name>
    <dbReference type="NCBI Taxonomy" id="284812"/>
    <lineage>
        <taxon>Eukaryota</taxon>
        <taxon>Fungi</taxon>
        <taxon>Dikarya</taxon>
        <taxon>Ascomycota</taxon>
        <taxon>Taphrinomycotina</taxon>
        <taxon>Schizosaccharomycetes</taxon>
        <taxon>Schizosaccharomycetales</taxon>
        <taxon>Schizosaccharomycetaceae</taxon>
        <taxon>Schizosaccharomyces</taxon>
    </lineage>
</organism>
<gene>
    <name type="primary">msd1</name>
    <name type="ORF">SPCC736.06</name>
</gene>
<proteinExistence type="inferred from homology"/>
<name>SYDM_SCHPO</name>
<keyword id="KW-0030">Aminoacyl-tRNA synthetase</keyword>
<keyword id="KW-0067">ATP-binding</keyword>
<keyword id="KW-0436">Ligase</keyword>
<keyword id="KW-0496">Mitochondrion</keyword>
<keyword id="KW-0547">Nucleotide-binding</keyword>
<keyword id="KW-0648">Protein biosynthesis</keyword>
<keyword id="KW-1185">Reference proteome</keyword>
<keyword id="KW-0809">Transit peptide</keyword>
<comment type="catalytic activity">
    <reaction>
        <text>tRNA(Asp) + L-aspartate + ATP = L-aspartyl-tRNA(Asp) + AMP + diphosphate</text>
        <dbReference type="Rhea" id="RHEA:19649"/>
        <dbReference type="Rhea" id="RHEA-COMP:9660"/>
        <dbReference type="Rhea" id="RHEA-COMP:9678"/>
        <dbReference type="ChEBI" id="CHEBI:29991"/>
        <dbReference type="ChEBI" id="CHEBI:30616"/>
        <dbReference type="ChEBI" id="CHEBI:33019"/>
        <dbReference type="ChEBI" id="CHEBI:78442"/>
        <dbReference type="ChEBI" id="CHEBI:78516"/>
        <dbReference type="ChEBI" id="CHEBI:456215"/>
        <dbReference type="EC" id="6.1.1.12"/>
    </reaction>
</comment>
<comment type="subcellular location">
    <subcellularLocation>
        <location evidence="2">Mitochondrion</location>
    </subcellularLocation>
</comment>
<comment type="similarity">
    <text evidence="3">Belongs to the class-II aminoacyl-tRNA synthetase family. Type 1 subfamily.</text>
</comment>
<feature type="transit peptide" description="Mitochondrion" evidence="3">
    <location>
        <begin position="1"/>
        <end position="30"/>
    </location>
</feature>
<feature type="chain" id="PRO_0000315952" description="Aspartate--tRNA ligase, mitochondrial">
    <location>
        <begin position="31"/>
        <end position="611"/>
    </location>
</feature>
<feature type="region of interest" description="Aspartate" evidence="1">
    <location>
        <begin position="216"/>
        <end position="219"/>
    </location>
</feature>
<feature type="binding site" evidence="1">
    <location>
        <position position="192"/>
    </location>
    <ligand>
        <name>L-aspartate</name>
        <dbReference type="ChEBI" id="CHEBI:29991"/>
    </ligand>
</feature>
<feature type="binding site" evidence="1">
    <location>
        <begin position="238"/>
        <end position="240"/>
    </location>
    <ligand>
        <name>ATP</name>
        <dbReference type="ChEBI" id="CHEBI:30616"/>
    </ligand>
</feature>
<feature type="binding site" evidence="1">
    <location>
        <position position="238"/>
    </location>
    <ligand>
        <name>L-aspartate</name>
        <dbReference type="ChEBI" id="CHEBI:29991"/>
    </ligand>
</feature>
<feature type="binding site" evidence="1">
    <location>
        <position position="502"/>
    </location>
    <ligand>
        <name>ATP</name>
        <dbReference type="ChEBI" id="CHEBI:30616"/>
    </ligand>
</feature>
<feature type="binding site" evidence="1">
    <location>
        <position position="509"/>
    </location>
    <ligand>
        <name>L-aspartate</name>
        <dbReference type="ChEBI" id="CHEBI:29991"/>
    </ligand>
</feature>
<feature type="binding site" evidence="1">
    <location>
        <begin position="554"/>
        <end position="557"/>
    </location>
    <ligand>
        <name>ATP</name>
        <dbReference type="ChEBI" id="CHEBI:30616"/>
    </ligand>
</feature>
<sequence>MVLSRLPACLLPLVGTKVSIQGWLVATSRQVSKSISFHQLRDTHGTILQLLSTDKIILQQKREPLVSSTDFSQQKSTSVMRTLSSIPPESVVQVTGKLQRRPEHDRRPGNEFELHVEDVKLLNVAKNLQLFPGDEKPGMRIQLANRHIQLRAPKYNSYLRQRSRLAYQVHSFFNDREFCEVETPLLFKSTPEGAREFVVPSRLNPGKFYALPQSPQQYKQILMASGIGNYYQIARCFRDEDLRFDRQPEFTQIDLEMSFVDKPHEIMEVVEDLLVRLVSFAKGITLAKPFQHITYQHAIDKYGSDKPDIRFELPLKNITSLLPKQDPLISTEILVYNDLSHSLSNAESRKLCEAVGENVVVTSIREHSQLQTWVKKLPQLRQLPIVAEELNQKLQIGINSIVFMTNRPKYLVSGTTPLGKLRLLLHELLVKKKALPELDKDLLKFVWVVDFPLFSPTEEKNQSITSTHHPFTAPHWDDVHLLEKKPLSVRGLHYDIVVNGIELGGGSIRIHNPDIQRFVLKDVLKLPENRYATFEHLIRVLSSGCPPHGGIALGFDRLAALLTNAPGIREVIAFPKTSSGADLLIGSPSAIPEEMLKDYNVAITRQTQNRN</sequence>
<evidence type="ECO:0000250" key="1"/>
<evidence type="ECO:0000269" key="2">
    <source>
    </source>
</evidence>
<evidence type="ECO:0000305" key="3"/>
<accession>O94242</accession>
<dbReference type="EC" id="6.1.1.12"/>
<dbReference type="EMBL" id="CU329672">
    <property type="protein sequence ID" value="CAA19270.1"/>
    <property type="molecule type" value="Genomic_DNA"/>
</dbReference>
<dbReference type="PIR" id="T41563">
    <property type="entry name" value="T41563"/>
</dbReference>
<dbReference type="SMR" id="O94242"/>
<dbReference type="BioGRID" id="275495">
    <property type="interactions" value="1"/>
</dbReference>
<dbReference type="FunCoup" id="O94242">
    <property type="interactions" value="494"/>
</dbReference>
<dbReference type="STRING" id="284812.O94242"/>
<dbReference type="iPTMnet" id="O94242"/>
<dbReference type="PaxDb" id="4896-SPCC736.06.1"/>
<dbReference type="EnsemblFungi" id="SPCC736.06.1">
    <property type="protein sequence ID" value="SPCC736.06.1:pep"/>
    <property type="gene ID" value="SPCC736.06"/>
</dbReference>
<dbReference type="KEGG" id="spo:2538918"/>
<dbReference type="PomBase" id="SPCC736.06"/>
<dbReference type="VEuPathDB" id="FungiDB:SPCC736.06"/>
<dbReference type="eggNOG" id="KOG2411">
    <property type="taxonomic scope" value="Eukaryota"/>
</dbReference>
<dbReference type="HOGENOM" id="CLU_014330_2_1_1"/>
<dbReference type="InParanoid" id="O94242"/>
<dbReference type="OMA" id="DWPLLEW"/>
<dbReference type="PhylomeDB" id="O94242"/>
<dbReference type="CD-CODE" id="576F0A76">
    <property type="entry name" value="Centrosome"/>
</dbReference>
<dbReference type="PRO" id="PR:O94242"/>
<dbReference type="Proteomes" id="UP000002485">
    <property type="component" value="Chromosome III"/>
</dbReference>
<dbReference type="GO" id="GO:0005759">
    <property type="term" value="C:mitochondrial matrix"/>
    <property type="evidence" value="ECO:0000305"/>
    <property type="project" value="PomBase"/>
</dbReference>
<dbReference type="GO" id="GO:0005739">
    <property type="term" value="C:mitochondrion"/>
    <property type="evidence" value="ECO:0007005"/>
    <property type="project" value="PomBase"/>
</dbReference>
<dbReference type="GO" id="GO:0004815">
    <property type="term" value="F:aspartate-tRNA ligase activity"/>
    <property type="evidence" value="ECO:0000318"/>
    <property type="project" value="GO_Central"/>
</dbReference>
<dbReference type="GO" id="GO:0005524">
    <property type="term" value="F:ATP binding"/>
    <property type="evidence" value="ECO:0000255"/>
    <property type="project" value="PomBase"/>
</dbReference>
<dbReference type="GO" id="GO:0003676">
    <property type="term" value="F:nucleic acid binding"/>
    <property type="evidence" value="ECO:0007669"/>
    <property type="project" value="InterPro"/>
</dbReference>
<dbReference type="GO" id="GO:0006422">
    <property type="term" value="P:aspartyl-tRNA aminoacylation"/>
    <property type="evidence" value="ECO:0000318"/>
    <property type="project" value="GO_Central"/>
</dbReference>
<dbReference type="GO" id="GO:0070146">
    <property type="term" value="P:mitochondrial aspartyl-tRNA aminoacylation"/>
    <property type="evidence" value="ECO:0000250"/>
    <property type="project" value="PomBase"/>
</dbReference>
<dbReference type="CDD" id="cd00777">
    <property type="entry name" value="AspRS_core"/>
    <property type="match status" value="1"/>
</dbReference>
<dbReference type="CDD" id="cd04321">
    <property type="entry name" value="ScAspRS_mt_like_N"/>
    <property type="match status" value="1"/>
</dbReference>
<dbReference type="Gene3D" id="3.30.930.10">
    <property type="entry name" value="Bira Bifunctional Protein, Domain 2"/>
    <property type="match status" value="1"/>
</dbReference>
<dbReference type="Gene3D" id="3.30.1360.30">
    <property type="entry name" value="GAD-like domain"/>
    <property type="match status" value="1"/>
</dbReference>
<dbReference type="Gene3D" id="2.40.50.140">
    <property type="entry name" value="Nucleic acid-binding proteins"/>
    <property type="match status" value="1"/>
</dbReference>
<dbReference type="HAMAP" id="MF_00044">
    <property type="entry name" value="Asp_tRNA_synth_type1"/>
    <property type="match status" value="1"/>
</dbReference>
<dbReference type="InterPro" id="IPR004364">
    <property type="entry name" value="Aa-tRNA-synt_II"/>
</dbReference>
<dbReference type="InterPro" id="IPR006195">
    <property type="entry name" value="aa-tRNA-synth_II"/>
</dbReference>
<dbReference type="InterPro" id="IPR045864">
    <property type="entry name" value="aa-tRNA-synth_II/BPL/LPL"/>
</dbReference>
<dbReference type="InterPro" id="IPR004524">
    <property type="entry name" value="Asp-tRNA-ligase_1"/>
</dbReference>
<dbReference type="InterPro" id="IPR002312">
    <property type="entry name" value="Asp/Asn-tRNA-synth_IIb"/>
</dbReference>
<dbReference type="InterPro" id="IPR047090">
    <property type="entry name" value="AspRS_core"/>
</dbReference>
<dbReference type="InterPro" id="IPR004115">
    <property type="entry name" value="GAD-like_sf"/>
</dbReference>
<dbReference type="InterPro" id="IPR012340">
    <property type="entry name" value="NA-bd_OB-fold"/>
</dbReference>
<dbReference type="InterPro" id="IPR004365">
    <property type="entry name" value="NA-bd_OB_tRNA"/>
</dbReference>
<dbReference type="NCBIfam" id="TIGR00459">
    <property type="entry name" value="aspS_bact"/>
    <property type="match status" value="1"/>
</dbReference>
<dbReference type="NCBIfam" id="NF001750">
    <property type="entry name" value="PRK00476.1"/>
    <property type="match status" value="1"/>
</dbReference>
<dbReference type="PANTHER" id="PTHR22594:SF5">
    <property type="entry name" value="ASPARTATE--TRNA LIGASE, MITOCHONDRIAL"/>
    <property type="match status" value="1"/>
</dbReference>
<dbReference type="PANTHER" id="PTHR22594">
    <property type="entry name" value="ASPARTYL/LYSYL-TRNA SYNTHETASE"/>
    <property type="match status" value="1"/>
</dbReference>
<dbReference type="Pfam" id="PF00152">
    <property type="entry name" value="tRNA-synt_2"/>
    <property type="match status" value="1"/>
</dbReference>
<dbReference type="Pfam" id="PF01336">
    <property type="entry name" value="tRNA_anti-codon"/>
    <property type="match status" value="1"/>
</dbReference>
<dbReference type="PRINTS" id="PR01042">
    <property type="entry name" value="TRNASYNTHASP"/>
</dbReference>
<dbReference type="SUPFAM" id="SSF55681">
    <property type="entry name" value="Class II aaRS and biotin synthetases"/>
    <property type="match status" value="1"/>
</dbReference>
<dbReference type="SUPFAM" id="SSF50249">
    <property type="entry name" value="Nucleic acid-binding proteins"/>
    <property type="match status" value="1"/>
</dbReference>
<dbReference type="PROSITE" id="PS50862">
    <property type="entry name" value="AA_TRNA_LIGASE_II"/>
    <property type="match status" value="1"/>
</dbReference>